<evidence type="ECO:0000250" key="1"/>
<evidence type="ECO:0000255" key="2"/>
<evidence type="ECO:0000305" key="3"/>
<accession>P69531</accession>
<accession>P03673</accession>
<gene>
    <name type="primary">VI</name>
</gene>
<proteinExistence type="evidence at protein level"/>
<comment type="function">
    <text evidence="1">Plays essential roles both in the entry of the viral genome into the bacterial host and in budding process. The formation of the G3P-G6P complex termed adsorption complex is essential for correct termination of filamentous phage assembly (By similarity).</text>
</comment>
<comment type="subunit">
    <text evidence="1">Interacts with G3P; this interaction is required for proper integration of G3P and G6P into the virion.</text>
</comment>
<comment type="subcellular location">
    <subcellularLocation>
        <location evidence="3">Virion</location>
    </subcellularLocation>
    <subcellularLocation>
        <location evidence="3">Host membrane</location>
        <topology evidence="3">Multi-pass membrane protein</topology>
    </subcellularLocation>
    <text evidence="1">Prior to assembly, G6P is found associated with the bacterial host inner membrane. There are about five copies of G6P in the mature virion. They are located together with G3P at the head side of the filamentous virion (By similarity).</text>
</comment>
<comment type="similarity">
    <text evidence="3">Belongs to the inovirus G6P protein family.</text>
</comment>
<keyword id="KW-0002">3D-structure</keyword>
<keyword id="KW-1043">Host membrane</keyword>
<keyword id="KW-0472">Membrane</keyword>
<keyword id="KW-0812">Transmembrane</keyword>
<keyword id="KW-1133">Transmembrane helix</keyword>
<keyword id="KW-1162">Viral penetration into host cytoplasm</keyword>
<keyword id="KW-1241">Viral penetration into host cytoplasm via pilus retraction</keyword>
<keyword id="KW-0946">Virion</keyword>
<keyword id="KW-1160">Virus entry into host cell</keyword>
<protein>
    <recommendedName>
        <fullName>Head virion protein G6P</fullName>
    </recommendedName>
    <alternativeName>
        <fullName>Coat protein D</fullName>
    </alternativeName>
    <alternativeName>
        <fullName>G6P</fullName>
    </alternativeName>
</protein>
<organismHost>
    <name type="scientific">Escherichia coli</name>
    <dbReference type="NCBI Taxonomy" id="562"/>
</organismHost>
<dbReference type="EMBL" id="V00606">
    <property type="protein sequence ID" value="CAA23873.1"/>
    <property type="molecule type" value="Genomic_DNA"/>
</dbReference>
<dbReference type="EMBL" id="J02448">
    <property type="protein sequence ID" value="AAA32216.1"/>
    <property type="molecule type" value="Genomic_DNA"/>
</dbReference>
<dbReference type="PIR" id="C04275">
    <property type="entry name" value="Z6BPF1"/>
</dbReference>
<dbReference type="RefSeq" id="YP_010775831.1">
    <property type="nucleotide sequence ID" value="NC_075025.1"/>
</dbReference>
<dbReference type="RefSeq" id="YP_010775841.1">
    <property type="nucleotide sequence ID" value="NC_075026.1"/>
</dbReference>
<dbReference type="PDB" id="8B3O">
    <property type="method" value="EM"/>
    <property type="resolution" value="2.97 A"/>
    <property type="chains" value="AAA/BBB/CCC/DDD/EEE=1-112"/>
</dbReference>
<dbReference type="PDBsum" id="8B3O"/>
<dbReference type="EMDB" id="EMD-15831"/>
<dbReference type="SMR" id="P69531"/>
<dbReference type="GeneID" id="80512429"/>
<dbReference type="GeneID" id="80512440"/>
<dbReference type="Proteomes" id="UP000002557">
    <property type="component" value="Genome"/>
</dbReference>
<dbReference type="Proteomes" id="UP000241027">
    <property type="component" value="Genome"/>
</dbReference>
<dbReference type="GO" id="GO:0033644">
    <property type="term" value="C:host cell membrane"/>
    <property type="evidence" value="ECO:0007669"/>
    <property type="project" value="UniProtKB-SubCell"/>
</dbReference>
<dbReference type="GO" id="GO:0016020">
    <property type="term" value="C:membrane"/>
    <property type="evidence" value="ECO:0007669"/>
    <property type="project" value="UniProtKB-KW"/>
</dbReference>
<dbReference type="GO" id="GO:0044423">
    <property type="term" value="C:virion component"/>
    <property type="evidence" value="ECO:0007669"/>
    <property type="project" value="UniProtKB-KW"/>
</dbReference>
<dbReference type="GO" id="GO:0046718">
    <property type="term" value="P:symbiont entry into host cell"/>
    <property type="evidence" value="ECO:0007669"/>
    <property type="project" value="UniProtKB-KW"/>
</dbReference>
<dbReference type="InterPro" id="IPR035210">
    <property type="entry name" value="DUF5455"/>
</dbReference>
<dbReference type="Pfam" id="PF17537">
    <property type="entry name" value="DUF5455"/>
    <property type="match status" value="1"/>
</dbReference>
<reference key="1">
    <citation type="journal article" date="1981" name="Gene">
        <title>Nucleotide sequence and genome organisation of filamentous bacteriophages f1 and fd.</title>
        <authorList>
            <person name="Beck E."/>
            <person name="Zink B."/>
        </authorList>
    </citation>
    <scope>NUCLEOTIDE SEQUENCE [GENOMIC DNA]</scope>
</reference>
<reference key="2">
    <citation type="journal article" date="1982" name="J. Virol.">
        <title>Nucleotide sequence of bacteriophage f1 DNA.</title>
        <authorList>
            <person name="Hill D.F."/>
            <person name="Petersen G.B."/>
        </authorList>
    </citation>
    <scope>NUCLEOTIDE SEQUENCE [GENOMIC DNA]</scope>
</reference>
<reference key="3">
    <citation type="journal article" date="1980" name="J. Biol. Chem.">
        <title>Isolation and characterization of the C and D proteins coded by gene IX and gene VI in the filamentous bacteriophage f1 and fd.</title>
        <authorList>
            <person name="Lin T.-C."/>
            <person name="Webster R.E."/>
            <person name="Konigsberg W."/>
        </authorList>
    </citation>
    <scope>IDENTIFICATION OF PROTEIN</scope>
</reference>
<organism>
    <name type="scientific">Enterobacteria phage f1</name>
    <name type="common">Bacteriophage f1</name>
    <dbReference type="NCBI Taxonomy" id="10863"/>
    <lineage>
        <taxon>Viruses</taxon>
        <taxon>Monodnaviria</taxon>
        <taxon>Loebvirae</taxon>
        <taxon>Hofneiviricota</taxon>
        <taxon>Faserviricetes</taxon>
        <taxon>Tubulavirales</taxon>
        <taxon>Inoviridae</taxon>
        <taxon>Inovirus</taxon>
        <taxon>Enterobacteria phage M13</taxon>
    </lineage>
</organism>
<feature type="chain" id="PRO_0000098190" description="Head virion protein G6P">
    <location>
        <begin position="1"/>
        <end position="112"/>
    </location>
</feature>
<feature type="transmembrane region" description="Helical" evidence="2">
    <location>
        <begin position="3"/>
        <end position="23"/>
    </location>
</feature>
<feature type="transmembrane region" description="Helical" evidence="2">
    <location>
        <begin position="36"/>
        <end position="56"/>
    </location>
</feature>
<feature type="transmembrane region" description="Helical" evidence="2">
    <location>
        <begin position="80"/>
        <end position="100"/>
    </location>
</feature>
<sequence>MPVLLGIPLLLRFLGFLLVTLFGYLLTFLKKGFGKIAIAISLFLALIIGLNSILVGYLSDISAQLPSDFVQGVQLILPSNALPCFYVILSVKAAIFIFDVKQKIVSYLDWDK</sequence>
<name>G6P_BPF1</name>